<protein>
    <recommendedName>
        <fullName evidence="1">Polyphosphate kinase</fullName>
        <ecNumber evidence="1">2.7.4.1</ecNumber>
    </recommendedName>
    <alternativeName>
        <fullName evidence="1">ATP-polyphosphate phosphotransferase</fullName>
    </alternativeName>
    <alternativeName>
        <fullName evidence="1">Polyphosphoric acid kinase</fullName>
    </alternativeName>
</protein>
<accession>Q7ULJ4</accession>
<evidence type="ECO:0000255" key="1">
    <source>
        <dbReference type="HAMAP-Rule" id="MF_00347"/>
    </source>
</evidence>
<evidence type="ECO:0000256" key="2">
    <source>
        <dbReference type="SAM" id="MobiDB-lite"/>
    </source>
</evidence>
<dbReference type="EC" id="2.7.4.1" evidence="1"/>
<dbReference type="EMBL" id="BX294149">
    <property type="protein sequence ID" value="CAD76283.1"/>
    <property type="molecule type" value="Genomic_DNA"/>
</dbReference>
<dbReference type="RefSeq" id="NP_868898.1">
    <property type="nucleotide sequence ID" value="NC_005027.1"/>
</dbReference>
<dbReference type="SMR" id="Q7ULJ4"/>
<dbReference type="FunCoup" id="Q7ULJ4">
    <property type="interactions" value="233"/>
</dbReference>
<dbReference type="STRING" id="243090.RB9470"/>
<dbReference type="EnsemblBacteria" id="CAD76283">
    <property type="protein sequence ID" value="CAD76283"/>
    <property type="gene ID" value="RB9470"/>
</dbReference>
<dbReference type="KEGG" id="rba:RB9470"/>
<dbReference type="PATRIC" id="fig|243090.15.peg.4534"/>
<dbReference type="eggNOG" id="COG0855">
    <property type="taxonomic scope" value="Bacteria"/>
</dbReference>
<dbReference type="HOGENOM" id="CLU_009678_5_0_0"/>
<dbReference type="InParanoid" id="Q7ULJ4"/>
<dbReference type="OrthoDB" id="9761456at2"/>
<dbReference type="Proteomes" id="UP000001025">
    <property type="component" value="Chromosome"/>
</dbReference>
<dbReference type="GO" id="GO:0016020">
    <property type="term" value="C:membrane"/>
    <property type="evidence" value="ECO:0000318"/>
    <property type="project" value="GO_Central"/>
</dbReference>
<dbReference type="GO" id="GO:0009358">
    <property type="term" value="C:polyphosphate kinase complex"/>
    <property type="evidence" value="ECO:0007669"/>
    <property type="project" value="InterPro"/>
</dbReference>
<dbReference type="GO" id="GO:0005524">
    <property type="term" value="F:ATP binding"/>
    <property type="evidence" value="ECO:0007669"/>
    <property type="project" value="UniProtKB-KW"/>
</dbReference>
<dbReference type="GO" id="GO:0046872">
    <property type="term" value="F:metal ion binding"/>
    <property type="evidence" value="ECO:0007669"/>
    <property type="project" value="UniProtKB-KW"/>
</dbReference>
<dbReference type="GO" id="GO:0008976">
    <property type="term" value="F:polyphosphate kinase activity"/>
    <property type="evidence" value="ECO:0000318"/>
    <property type="project" value="GO_Central"/>
</dbReference>
<dbReference type="GO" id="GO:0006799">
    <property type="term" value="P:polyphosphate biosynthetic process"/>
    <property type="evidence" value="ECO:0000318"/>
    <property type="project" value="GO_Central"/>
</dbReference>
<dbReference type="CDD" id="cd09165">
    <property type="entry name" value="PLDc_PaPPK1_C1_like"/>
    <property type="match status" value="1"/>
</dbReference>
<dbReference type="CDD" id="cd09168">
    <property type="entry name" value="PLDc_PaPPK1_C2_like"/>
    <property type="match status" value="1"/>
</dbReference>
<dbReference type="Gene3D" id="3.30.870.10">
    <property type="entry name" value="Endonuclease Chain A"/>
    <property type="match status" value="2"/>
</dbReference>
<dbReference type="Gene3D" id="3.30.1840.10">
    <property type="entry name" value="Polyphosphate kinase middle domain"/>
    <property type="match status" value="1"/>
</dbReference>
<dbReference type="Gene3D" id="1.20.58.310">
    <property type="entry name" value="Polyphosphate kinase N-terminal domain"/>
    <property type="match status" value="1"/>
</dbReference>
<dbReference type="HAMAP" id="MF_00347">
    <property type="entry name" value="Polyphosphate_kinase"/>
    <property type="match status" value="1"/>
</dbReference>
<dbReference type="InterPro" id="IPR003414">
    <property type="entry name" value="PP_kinase"/>
</dbReference>
<dbReference type="InterPro" id="IPR041108">
    <property type="entry name" value="PP_kinase_C_1"/>
</dbReference>
<dbReference type="InterPro" id="IPR024953">
    <property type="entry name" value="PP_kinase_middle"/>
</dbReference>
<dbReference type="InterPro" id="IPR036830">
    <property type="entry name" value="PP_kinase_middle_dom_sf"/>
</dbReference>
<dbReference type="InterPro" id="IPR025200">
    <property type="entry name" value="PPK_C_dom2"/>
</dbReference>
<dbReference type="InterPro" id="IPR025198">
    <property type="entry name" value="PPK_N_dom"/>
</dbReference>
<dbReference type="InterPro" id="IPR036832">
    <property type="entry name" value="PPK_N_dom_sf"/>
</dbReference>
<dbReference type="NCBIfam" id="TIGR03705">
    <property type="entry name" value="poly_P_kin"/>
    <property type="match status" value="1"/>
</dbReference>
<dbReference type="NCBIfam" id="NF003921">
    <property type="entry name" value="PRK05443.2-2"/>
    <property type="match status" value="1"/>
</dbReference>
<dbReference type="PANTHER" id="PTHR30218">
    <property type="entry name" value="POLYPHOSPHATE KINASE"/>
    <property type="match status" value="1"/>
</dbReference>
<dbReference type="PANTHER" id="PTHR30218:SF0">
    <property type="entry name" value="POLYPHOSPHATE KINASE"/>
    <property type="match status" value="1"/>
</dbReference>
<dbReference type="Pfam" id="PF02503">
    <property type="entry name" value="PP_kinase"/>
    <property type="match status" value="1"/>
</dbReference>
<dbReference type="Pfam" id="PF13090">
    <property type="entry name" value="PP_kinase_C"/>
    <property type="match status" value="1"/>
</dbReference>
<dbReference type="Pfam" id="PF17941">
    <property type="entry name" value="PP_kinase_C_1"/>
    <property type="match status" value="1"/>
</dbReference>
<dbReference type="Pfam" id="PF13089">
    <property type="entry name" value="PP_kinase_N"/>
    <property type="match status" value="1"/>
</dbReference>
<dbReference type="SUPFAM" id="SSF56024">
    <property type="entry name" value="Phospholipase D/nuclease"/>
    <property type="match status" value="2"/>
</dbReference>
<dbReference type="SUPFAM" id="SSF143724">
    <property type="entry name" value="PHP14-like"/>
    <property type="match status" value="2"/>
</dbReference>
<dbReference type="SUPFAM" id="SSF140356">
    <property type="entry name" value="PPK N-terminal domain-like"/>
    <property type="match status" value="1"/>
</dbReference>
<name>PPK1_RHOBA</name>
<gene>
    <name evidence="1" type="primary">ppk</name>
    <name type="ordered locus">RB9470</name>
</gene>
<keyword id="KW-0067">ATP-binding</keyword>
<keyword id="KW-0418">Kinase</keyword>
<keyword id="KW-0460">Magnesium</keyword>
<keyword id="KW-0479">Metal-binding</keyword>
<keyword id="KW-0547">Nucleotide-binding</keyword>
<keyword id="KW-0597">Phosphoprotein</keyword>
<keyword id="KW-1185">Reference proteome</keyword>
<keyword id="KW-0808">Transferase</keyword>
<proteinExistence type="inferred from homology"/>
<comment type="function">
    <text evidence="1">Catalyzes the reversible transfer of the terminal phosphate of ATP to form a long-chain polyphosphate (polyP).</text>
</comment>
<comment type="catalytic activity">
    <reaction evidence="1">
        <text>[phosphate](n) + ATP = [phosphate](n+1) + ADP</text>
        <dbReference type="Rhea" id="RHEA:19573"/>
        <dbReference type="Rhea" id="RHEA-COMP:9859"/>
        <dbReference type="Rhea" id="RHEA-COMP:14280"/>
        <dbReference type="ChEBI" id="CHEBI:16838"/>
        <dbReference type="ChEBI" id="CHEBI:30616"/>
        <dbReference type="ChEBI" id="CHEBI:456216"/>
        <dbReference type="EC" id="2.7.4.1"/>
    </reaction>
</comment>
<comment type="cofactor">
    <cofactor evidence="1">
        <name>Mg(2+)</name>
        <dbReference type="ChEBI" id="CHEBI:18420"/>
    </cofactor>
</comment>
<comment type="PTM">
    <text evidence="1">An intermediate of this reaction is the autophosphorylated ppk in which a phosphate is covalently linked to a histidine residue through a N-P bond.</text>
</comment>
<comment type="similarity">
    <text evidence="1">Belongs to the polyphosphate kinase 1 (PPK1) family.</text>
</comment>
<reference key="1">
    <citation type="journal article" date="2003" name="Proc. Natl. Acad. Sci. U.S.A.">
        <title>Complete genome sequence of the marine planctomycete Pirellula sp. strain 1.</title>
        <authorList>
            <person name="Gloeckner F.O."/>
            <person name="Kube M."/>
            <person name="Bauer M."/>
            <person name="Teeling H."/>
            <person name="Lombardot T."/>
            <person name="Ludwig W."/>
            <person name="Gade D."/>
            <person name="Beck A."/>
            <person name="Borzym K."/>
            <person name="Heitmann K."/>
            <person name="Rabus R."/>
            <person name="Schlesner H."/>
            <person name="Amann R."/>
            <person name="Reinhardt R."/>
        </authorList>
    </citation>
    <scope>NUCLEOTIDE SEQUENCE [LARGE SCALE GENOMIC DNA]</scope>
    <source>
        <strain>DSM 10527 / NCIMB 13988 / SH1</strain>
    </source>
</reference>
<sequence>MATGVSSRDGSRERIRRRAVARDHPGCGPHRLDRPIGHIRYPHRHSISFSPFASLTLSHDPAPSQSVGKRPQKSTKTASRRKVETAAADAPRFINRELAWLEFNARVLDQADDPSVRLLERAKFLAITSSNLDEFMMVRVGSLKLQAVSGGGRRDPSGRTATEQLQAISKRCQGHVDRQYELLRNELLPLLGEHKINQVDPAECSDRLLAAAERHFRGDVLAVLSPQALHDRRFPMLPGLGIHLCVQLRPGDEIGPQRTPPPSDSLDNRVPSNLKRNSDTANQQPTPAENISAPEDGAEQTEPETQFAVIPLGRTLGRVIPLPIEKPPIEKGVAPKESDDTSPIESGYSYALLEDLVSHFVDEFFPGREVIQCKPFRITRNADIELREDGAGDLLGGMEEVLESRRLSDVVRLEIDANANSEIRDYLIKSFNVDPQFVFDIDGPLDLTYLFALHGLKGMNTLRDDEWPPQRSPRIDPAESMFTSISDGDIMLMHPYESFDPVVRLLEEASVDPDVLAVKQILYRTSRNSPIVAALMRAAERGKYVTAIVELKARFDEARNIEWAREMEQAGVQVIYGIRGLKTHAKVCIIVRREPQGLVRYVHFGTGNYNEVTANLYGDISVLTCDEILGTDATMFFNAVTGASQPQPLQQLGMAPLTLRRQILDLIQGETERSRQGQKGEIIAKMNALVDTEVIDSLYMASQAGVKIRLNVRGVCCLRPGVPGMSETIEVVSIVDRFLEHARTFYFRHGGDHEMFISSADWMPRNLDRRVELLVPVIDPAARKRLRETLQLYFRDNQNAWRMQPDGSYQRLKPRKNEAPMRVQETLYHQVVENRKAGKHAPQSTFETHRPD</sequence>
<organism>
    <name type="scientific">Rhodopirellula baltica (strain DSM 10527 / NCIMB 13988 / SH1)</name>
    <dbReference type="NCBI Taxonomy" id="243090"/>
    <lineage>
        <taxon>Bacteria</taxon>
        <taxon>Pseudomonadati</taxon>
        <taxon>Planctomycetota</taxon>
        <taxon>Planctomycetia</taxon>
        <taxon>Pirellulales</taxon>
        <taxon>Pirellulaceae</taxon>
        <taxon>Rhodopirellula</taxon>
    </lineage>
</organism>
<feature type="chain" id="PRO_0000226301" description="Polyphosphate kinase">
    <location>
        <begin position="1"/>
        <end position="852"/>
    </location>
</feature>
<feature type="region of interest" description="Disordered" evidence="2">
    <location>
        <begin position="1"/>
        <end position="36"/>
    </location>
</feature>
<feature type="region of interest" description="Disordered" evidence="2">
    <location>
        <begin position="58"/>
        <end position="82"/>
    </location>
</feature>
<feature type="region of interest" description="Disordered" evidence="2">
    <location>
        <begin position="251"/>
        <end position="303"/>
    </location>
</feature>
<feature type="region of interest" description="Insert">
    <location>
        <begin position="258"/>
        <end position="303"/>
    </location>
</feature>
<feature type="compositionally biased region" description="Basic and acidic residues" evidence="2">
    <location>
        <begin position="20"/>
        <end position="36"/>
    </location>
</feature>
<feature type="compositionally biased region" description="Polar residues" evidence="2">
    <location>
        <begin position="58"/>
        <end position="67"/>
    </location>
</feature>
<feature type="compositionally biased region" description="Polar residues" evidence="2">
    <location>
        <begin position="270"/>
        <end position="289"/>
    </location>
</feature>
<feature type="active site" description="Phosphohistidine intermediate" evidence="1">
    <location>
        <position position="584"/>
    </location>
</feature>
<feature type="binding site" evidence="1">
    <location>
        <position position="131"/>
    </location>
    <ligand>
        <name>ATP</name>
        <dbReference type="ChEBI" id="CHEBI:30616"/>
    </ligand>
</feature>
<feature type="binding site" evidence="1">
    <location>
        <position position="524"/>
    </location>
    <ligand>
        <name>Mg(2+)</name>
        <dbReference type="ChEBI" id="CHEBI:18420"/>
    </ligand>
</feature>
<feature type="binding site" evidence="1">
    <location>
        <position position="554"/>
    </location>
    <ligand>
        <name>Mg(2+)</name>
        <dbReference type="ChEBI" id="CHEBI:18420"/>
    </ligand>
</feature>
<feature type="binding site" evidence="1">
    <location>
        <position position="617"/>
    </location>
    <ligand>
        <name>ATP</name>
        <dbReference type="ChEBI" id="CHEBI:30616"/>
    </ligand>
</feature>
<feature type="binding site" evidence="1">
    <location>
        <position position="713"/>
    </location>
    <ligand>
        <name>ATP</name>
        <dbReference type="ChEBI" id="CHEBI:30616"/>
    </ligand>
</feature>
<feature type="binding site" evidence="1">
    <location>
        <position position="741"/>
    </location>
    <ligand>
        <name>ATP</name>
        <dbReference type="ChEBI" id="CHEBI:30616"/>
    </ligand>
</feature>